<name>TIPT_DROME</name>
<comment type="function">
    <text evidence="3">Tiptop (tio) and teashirt (tsh) have, on the whole, common activities. Tio and tsh repress each other's expression and tsh has a crucial role for trunk patterning that is in part masked by ectopic expression of tiptop. Both genes share a common activity required for the activation of Ser and svb and the maintenance of en and wg.</text>
</comment>
<comment type="subcellular location">
    <subcellularLocation>
        <location evidence="4">Nucleus</location>
    </subcellularLocation>
</comment>
<comment type="tissue specificity">
    <text evidence="3">Expression in the Malpighian tubules (MTs) and stomatogastric nervous system starts at embryonic stage 10. At stage 11, expression in the head domain is initiated in the clypeolabrum in two bilaterally symmetric clusters of cells. At stage 12, expression appears in the central nervous system (CNS) of the trunk and the epidermis. The staining in the hindgut is maintained throughout embryogenesis. At stage 13, expression is present in elongating MTs. The anterior staining is detected in cells that invaginate into the stomodeum and by stage 15 onwards, in cells close to the pharynx. Also expressed in cells of the brain, the second constriction of the gut, the trunk epidermis, the anterior segments of the CNS (the three thoracic and the first two abdominal segments) and in the MTs. From stage 12 onwards, tsh and tio are colocalized in some cells.</text>
</comment>
<comment type="miscellaneous">
    <text>The tsh tio gene pair seems to have arisen from a recent duplication event: tsh has the dominant role compared to tio.</text>
</comment>
<comment type="similarity">
    <text evidence="4">Belongs to the teashirt C2H2-type zinc-finger protein family.</text>
</comment>
<comment type="sequence caution" evidence="4">
    <conflict type="erroneous initiation">
        <sequence resource="EMBL-CDS" id="AAF23183"/>
    </conflict>
</comment>
<comment type="sequence caution" evidence="4">
    <conflict type="erroneous translation">
        <sequence resource="EMBL-CDS" id="AAL28355"/>
    </conflict>
    <text>Wrong choice of frame.</text>
</comment>
<gene>
    <name type="primary">tio</name>
    <name type="ORF">CG12630</name>
</gene>
<reference key="1">
    <citation type="journal article" date="2005" name="Dev. Biol.">
        <title>A critical role of teashirt for patterning the ventral epidermis is masked by ectopic expression of tiptop, a paralog of teashirt in Drosophila.</title>
        <authorList>
            <person name="Laugier E."/>
            <person name="Yang Z."/>
            <person name="Fasano L."/>
            <person name="Kerridge S."/>
            <person name="Vola C."/>
        </authorList>
    </citation>
    <scope>NUCLEOTIDE SEQUENCE [MRNA]</scope>
    <scope>FUNCTION</scope>
    <scope>TISSUE SPECIFICITY</scope>
</reference>
<reference key="2">
    <citation type="journal article" date="2000" name="Science">
        <title>The genome sequence of Drosophila melanogaster.</title>
        <authorList>
            <person name="Adams M.D."/>
            <person name="Celniker S.E."/>
            <person name="Holt R.A."/>
            <person name="Evans C.A."/>
            <person name="Gocayne J.D."/>
            <person name="Amanatides P.G."/>
            <person name="Scherer S.E."/>
            <person name="Li P.W."/>
            <person name="Hoskins R.A."/>
            <person name="Galle R.F."/>
            <person name="George R.A."/>
            <person name="Lewis S.E."/>
            <person name="Richards S."/>
            <person name="Ashburner M."/>
            <person name="Henderson S.N."/>
            <person name="Sutton G.G."/>
            <person name="Wortman J.R."/>
            <person name="Yandell M.D."/>
            <person name="Zhang Q."/>
            <person name="Chen L.X."/>
            <person name="Brandon R.C."/>
            <person name="Rogers Y.-H.C."/>
            <person name="Blazej R.G."/>
            <person name="Champe M."/>
            <person name="Pfeiffer B.D."/>
            <person name="Wan K.H."/>
            <person name="Doyle C."/>
            <person name="Baxter E.G."/>
            <person name="Helt G."/>
            <person name="Nelson C.R."/>
            <person name="Miklos G.L.G."/>
            <person name="Abril J.F."/>
            <person name="Agbayani A."/>
            <person name="An H.-J."/>
            <person name="Andrews-Pfannkoch C."/>
            <person name="Baldwin D."/>
            <person name="Ballew R.M."/>
            <person name="Basu A."/>
            <person name="Baxendale J."/>
            <person name="Bayraktaroglu L."/>
            <person name="Beasley E.M."/>
            <person name="Beeson K.Y."/>
            <person name="Benos P.V."/>
            <person name="Berman B.P."/>
            <person name="Bhandari D."/>
            <person name="Bolshakov S."/>
            <person name="Borkova D."/>
            <person name="Botchan M.R."/>
            <person name="Bouck J."/>
            <person name="Brokstein P."/>
            <person name="Brottier P."/>
            <person name="Burtis K.C."/>
            <person name="Busam D.A."/>
            <person name="Butler H."/>
            <person name="Cadieu E."/>
            <person name="Center A."/>
            <person name="Chandra I."/>
            <person name="Cherry J.M."/>
            <person name="Cawley S."/>
            <person name="Dahlke C."/>
            <person name="Davenport L.B."/>
            <person name="Davies P."/>
            <person name="de Pablos B."/>
            <person name="Delcher A."/>
            <person name="Deng Z."/>
            <person name="Mays A.D."/>
            <person name="Dew I."/>
            <person name="Dietz S.M."/>
            <person name="Dodson K."/>
            <person name="Doup L.E."/>
            <person name="Downes M."/>
            <person name="Dugan-Rocha S."/>
            <person name="Dunkov B.C."/>
            <person name="Dunn P."/>
            <person name="Durbin K.J."/>
            <person name="Evangelista C.C."/>
            <person name="Ferraz C."/>
            <person name="Ferriera S."/>
            <person name="Fleischmann W."/>
            <person name="Fosler C."/>
            <person name="Gabrielian A.E."/>
            <person name="Garg N.S."/>
            <person name="Gelbart W.M."/>
            <person name="Glasser K."/>
            <person name="Glodek A."/>
            <person name="Gong F."/>
            <person name="Gorrell J.H."/>
            <person name="Gu Z."/>
            <person name="Guan P."/>
            <person name="Harris M."/>
            <person name="Harris N.L."/>
            <person name="Harvey D.A."/>
            <person name="Heiman T.J."/>
            <person name="Hernandez J.R."/>
            <person name="Houck J."/>
            <person name="Hostin D."/>
            <person name="Houston K.A."/>
            <person name="Howland T.J."/>
            <person name="Wei M.-H."/>
            <person name="Ibegwam C."/>
            <person name="Jalali M."/>
            <person name="Kalush F."/>
            <person name="Karpen G.H."/>
            <person name="Ke Z."/>
            <person name="Kennison J.A."/>
            <person name="Ketchum K.A."/>
            <person name="Kimmel B.E."/>
            <person name="Kodira C.D."/>
            <person name="Kraft C.L."/>
            <person name="Kravitz S."/>
            <person name="Kulp D."/>
            <person name="Lai Z."/>
            <person name="Lasko P."/>
            <person name="Lei Y."/>
            <person name="Levitsky A.A."/>
            <person name="Li J.H."/>
            <person name="Li Z."/>
            <person name="Liang Y."/>
            <person name="Lin X."/>
            <person name="Liu X."/>
            <person name="Mattei B."/>
            <person name="McIntosh T.C."/>
            <person name="McLeod M.P."/>
            <person name="McPherson D."/>
            <person name="Merkulov G."/>
            <person name="Milshina N.V."/>
            <person name="Mobarry C."/>
            <person name="Morris J."/>
            <person name="Moshrefi A."/>
            <person name="Mount S.M."/>
            <person name="Moy M."/>
            <person name="Murphy B."/>
            <person name="Murphy L."/>
            <person name="Muzny D.M."/>
            <person name="Nelson D.L."/>
            <person name="Nelson D.R."/>
            <person name="Nelson K.A."/>
            <person name="Nixon K."/>
            <person name="Nusskern D.R."/>
            <person name="Pacleb J.M."/>
            <person name="Palazzolo M."/>
            <person name="Pittman G.S."/>
            <person name="Pan S."/>
            <person name="Pollard J."/>
            <person name="Puri V."/>
            <person name="Reese M.G."/>
            <person name="Reinert K."/>
            <person name="Remington K."/>
            <person name="Saunders R.D.C."/>
            <person name="Scheeler F."/>
            <person name="Shen H."/>
            <person name="Shue B.C."/>
            <person name="Siden-Kiamos I."/>
            <person name="Simpson M."/>
            <person name="Skupski M.P."/>
            <person name="Smith T.J."/>
            <person name="Spier E."/>
            <person name="Spradling A.C."/>
            <person name="Stapleton M."/>
            <person name="Strong R."/>
            <person name="Sun E."/>
            <person name="Svirskas R."/>
            <person name="Tector C."/>
            <person name="Turner R."/>
            <person name="Venter E."/>
            <person name="Wang A.H."/>
            <person name="Wang X."/>
            <person name="Wang Z.-Y."/>
            <person name="Wassarman D.A."/>
            <person name="Weinstock G.M."/>
            <person name="Weissenbach J."/>
            <person name="Williams S.M."/>
            <person name="Woodage T."/>
            <person name="Worley K.C."/>
            <person name="Wu D."/>
            <person name="Yang S."/>
            <person name="Yao Q.A."/>
            <person name="Ye J."/>
            <person name="Yeh R.-F."/>
            <person name="Zaveri J.S."/>
            <person name="Zhan M."/>
            <person name="Zhang G."/>
            <person name="Zhao Q."/>
            <person name="Zheng L."/>
            <person name="Zheng X.H."/>
            <person name="Zhong F.N."/>
            <person name="Zhong W."/>
            <person name="Zhou X."/>
            <person name="Zhu S.C."/>
            <person name="Zhu X."/>
            <person name="Smith H.O."/>
            <person name="Gibbs R.A."/>
            <person name="Myers E.W."/>
            <person name="Rubin G.M."/>
            <person name="Venter J.C."/>
        </authorList>
    </citation>
    <scope>NUCLEOTIDE SEQUENCE [LARGE SCALE GENOMIC DNA]</scope>
    <source>
        <strain>Berkeley</strain>
    </source>
</reference>
<reference key="3">
    <citation type="journal article" date="2002" name="Genome Biol.">
        <title>Annotation of the Drosophila melanogaster euchromatic genome: a systematic review.</title>
        <authorList>
            <person name="Misra S."/>
            <person name="Crosby M.A."/>
            <person name="Mungall C.J."/>
            <person name="Matthews B.B."/>
            <person name="Campbell K.S."/>
            <person name="Hradecky P."/>
            <person name="Huang Y."/>
            <person name="Kaminker J.S."/>
            <person name="Millburn G.H."/>
            <person name="Prochnik S.E."/>
            <person name="Smith C.D."/>
            <person name="Tupy J.L."/>
            <person name="Whitfield E.J."/>
            <person name="Bayraktaroglu L."/>
            <person name="Berman B.P."/>
            <person name="Bettencourt B.R."/>
            <person name="Celniker S.E."/>
            <person name="de Grey A.D.N.J."/>
            <person name="Drysdale R.A."/>
            <person name="Harris N.L."/>
            <person name="Richter J."/>
            <person name="Russo S."/>
            <person name="Schroeder A.J."/>
            <person name="Shu S.Q."/>
            <person name="Stapleton M."/>
            <person name="Yamada C."/>
            <person name="Ashburner M."/>
            <person name="Gelbart W.M."/>
            <person name="Rubin G.M."/>
            <person name="Lewis S.E."/>
        </authorList>
    </citation>
    <scope>GENOME REANNOTATION</scope>
    <source>
        <strain>Berkeley</strain>
    </source>
</reference>
<reference key="4">
    <citation type="journal article" date="2002" name="Genome Biol.">
        <title>A Drosophila full-length cDNA resource.</title>
        <authorList>
            <person name="Stapleton M."/>
            <person name="Carlson J.W."/>
            <person name="Brokstein P."/>
            <person name="Yu C."/>
            <person name="Champe M."/>
            <person name="George R.A."/>
            <person name="Guarin H."/>
            <person name="Kronmiller B."/>
            <person name="Pacleb J.M."/>
            <person name="Park S."/>
            <person name="Wan K.H."/>
            <person name="Rubin G.M."/>
            <person name="Celniker S.E."/>
        </authorList>
    </citation>
    <scope>NUCLEOTIDE SEQUENCE [LARGE SCALE MRNA] OF 1-18</scope>
    <source>
        <strain>Berkeley</strain>
        <tissue>Head</tissue>
    </source>
</reference>
<organism>
    <name type="scientific">Drosophila melanogaster</name>
    <name type="common">Fruit fly</name>
    <dbReference type="NCBI Taxonomy" id="7227"/>
    <lineage>
        <taxon>Eukaryota</taxon>
        <taxon>Metazoa</taxon>
        <taxon>Ecdysozoa</taxon>
        <taxon>Arthropoda</taxon>
        <taxon>Hexapoda</taxon>
        <taxon>Insecta</taxon>
        <taxon>Pterygota</taxon>
        <taxon>Neoptera</taxon>
        <taxon>Endopterygota</taxon>
        <taxon>Diptera</taxon>
        <taxon>Brachycera</taxon>
        <taxon>Muscomorpha</taxon>
        <taxon>Ephydroidea</taxon>
        <taxon>Drosophilidae</taxon>
        <taxon>Drosophila</taxon>
        <taxon>Sophophora</taxon>
    </lineage>
</organism>
<feature type="chain" id="PRO_0000047068" description="Protein tiptop">
    <location>
        <begin position="1"/>
        <end position="1024"/>
    </location>
</feature>
<feature type="zinc finger region" description="C2H2-type 1" evidence="1">
    <location>
        <begin position="317"/>
        <end position="341"/>
    </location>
</feature>
<feature type="zinc finger region" description="C2H2-type 2" evidence="1">
    <location>
        <begin position="426"/>
        <end position="450"/>
    </location>
</feature>
<feature type="zinc finger region" description="C2H2-type 3" evidence="1">
    <location>
        <begin position="499"/>
        <end position="523"/>
    </location>
</feature>
<feature type="zinc finger region" description="C2H2-type 4" evidence="1">
    <location>
        <begin position="926"/>
        <end position="949"/>
    </location>
</feature>
<feature type="region of interest" description="Disordered" evidence="2">
    <location>
        <begin position="20"/>
        <end position="40"/>
    </location>
</feature>
<feature type="region of interest" description="Disordered" evidence="2">
    <location>
        <begin position="138"/>
        <end position="215"/>
    </location>
</feature>
<feature type="region of interest" description="Disordered" evidence="2">
    <location>
        <begin position="350"/>
        <end position="392"/>
    </location>
</feature>
<feature type="region of interest" description="Disordered" evidence="2">
    <location>
        <begin position="466"/>
        <end position="489"/>
    </location>
</feature>
<feature type="region of interest" description="Disordered" evidence="2">
    <location>
        <begin position="519"/>
        <end position="576"/>
    </location>
</feature>
<feature type="region of interest" description="Disordered" evidence="2">
    <location>
        <begin position="712"/>
        <end position="759"/>
    </location>
</feature>
<feature type="region of interest" description="Disordered" evidence="2">
    <location>
        <begin position="786"/>
        <end position="818"/>
    </location>
</feature>
<feature type="region of interest" description="Disordered" evidence="2">
    <location>
        <begin position="868"/>
        <end position="891"/>
    </location>
</feature>
<feature type="region of interest" description="Disordered" evidence="2">
    <location>
        <begin position="954"/>
        <end position="1004"/>
    </location>
</feature>
<feature type="compositionally biased region" description="Polar residues" evidence="2">
    <location>
        <begin position="20"/>
        <end position="35"/>
    </location>
</feature>
<feature type="compositionally biased region" description="Acidic residues" evidence="2">
    <location>
        <begin position="159"/>
        <end position="175"/>
    </location>
</feature>
<feature type="compositionally biased region" description="Low complexity" evidence="2">
    <location>
        <begin position="368"/>
        <end position="391"/>
    </location>
</feature>
<feature type="compositionally biased region" description="Low complexity" evidence="2">
    <location>
        <begin position="477"/>
        <end position="489"/>
    </location>
</feature>
<feature type="compositionally biased region" description="Low complexity" evidence="2">
    <location>
        <begin position="527"/>
        <end position="537"/>
    </location>
</feature>
<feature type="compositionally biased region" description="Basic residues" evidence="2">
    <location>
        <begin position="543"/>
        <end position="558"/>
    </location>
</feature>
<feature type="compositionally biased region" description="Low complexity" evidence="2">
    <location>
        <begin position="718"/>
        <end position="729"/>
    </location>
</feature>
<feature type="compositionally biased region" description="Pro residues" evidence="2">
    <location>
        <begin position="745"/>
        <end position="755"/>
    </location>
</feature>
<feature type="compositionally biased region" description="Basic and acidic residues" evidence="2">
    <location>
        <begin position="786"/>
        <end position="795"/>
    </location>
</feature>
<feature type="compositionally biased region" description="Polar residues" evidence="2">
    <location>
        <begin position="796"/>
        <end position="808"/>
    </location>
</feature>
<feature type="compositionally biased region" description="Low complexity" evidence="2">
    <location>
        <begin position="874"/>
        <end position="891"/>
    </location>
</feature>
<feature type="compositionally biased region" description="Low complexity" evidence="2">
    <location>
        <begin position="968"/>
        <end position="990"/>
    </location>
</feature>
<protein>
    <recommendedName>
        <fullName>Protein tiptop</fullName>
    </recommendedName>
</protein>
<proteinExistence type="evidence at transcript level"/>
<evidence type="ECO:0000255" key="1">
    <source>
        <dbReference type="PROSITE-ProRule" id="PRU00042"/>
    </source>
</evidence>
<evidence type="ECO:0000256" key="2">
    <source>
        <dbReference type="SAM" id="MobiDB-lite"/>
    </source>
</evidence>
<evidence type="ECO:0000269" key="3">
    <source>
    </source>
</evidence>
<evidence type="ECO:0000305" key="4"/>
<dbReference type="EMBL" id="AF219383">
    <property type="protein sequence ID" value="AAF23183.1"/>
    <property type="status" value="ALT_INIT"/>
    <property type="molecule type" value="mRNA"/>
</dbReference>
<dbReference type="EMBL" id="AE014134">
    <property type="protein sequence ID" value="AAF57242.3"/>
    <property type="molecule type" value="Genomic_DNA"/>
</dbReference>
<dbReference type="EMBL" id="AY060807">
    <property type="protein sequence ID" value="AAL28355.1"/>
    <property type="status" value="ALT_SEQ"/>
    <property type="molecule type" value="mRNA"/>
</dbReference>
<dbReference type="RefSeq" id="NP_001260679.1">
    <property type="nucleotide sequence ID" value="NM_001273750.1"/>
</dbReference>
<dbReference type="RefSeq" id="NP_524733.2">
    <property type="nucleotide sequence ID" value="NM_079994.4"/>
</dbReference>
<dbReference type="BioGRID" id="68936">
    <property type="interactions" value="11"/>
</dbReference>
<dbReference type="FunCoup" id="Q9U3V5">
    <property type="interactions" value="154"/>
</dbReference>
<dbReference type="IntAct" id="Q9U3V5">
    <property type="interactions" value="9"/>
</dbReference>
<dbReference type="STRING" id="7227.FBpp0307374"/>
<dbReference type="GlyGen" id="Q9U3V5">
    <property type="glycosylation" value="1 site"/>
</dbReference>
<dbReference type="PaxDb" id="7227-FBpp0088404"/>
<dbReference type="EnsemblMetazoa" id="FBtr0089377">
    <property type="protein sequence ID" value="FBpp0088404"/>
    <property type="gene ID" value="FBgn0028979"/>
</dbReference>
<dbReference type="EnsemblMetazoa" id="FBtr0335391">
    <property type="protein sequence ID" value="FBpp0307374"/>
    <property type="gene ID" value="FBgn0028979"/>
</dbReference>
<dbReference type="GeneID" id="44272"/>
<dbReference type="KEGG" id="dme:Dmel_CG12630"/>
<dbReference type="UCSC" id="CG12630-RA">
    <property type="organism name" value="d. melanogaster"/>
</dbReference>
<dbReference type="AGR" id="FB:FBgn0028979"/>
<dbReference type="CTD" id="44272"/>
<dbReference type="FlyBase" id="FBgn0028979">
    <property type="gene designation" value="tio"/>
</dbReference>
<dbReference type="VEuPathDB" id="VectorBase:FBgn0028979"/>
<dbReference type="eggNOG" id="ENOG502QV71">
    <property type="taxonomic scope" value="Eukaryota"/>
</dbReference>
<dbReference type="GeneTree" id="ENSGT00950000183051"/>
<dbReference type="HOGENOM" id="CLU_007777_0_0_1"/>
<dbReference type="InParanoid" id="Q9U3V5"/>
<dbReference type="OMA" id="VPPINPY"/>
<dbReference type="OrthoDB" id="5815793at2759"/>
<dbReference type="PhylomeDB" id="Q9U3V5"/>
<dbReference type="BioGRID-ORCS" id="44272">
    <property type="hits" value="0 hits in 3 CRISPR screens"/>
</dbReference>
<dbReference type="ChiTaRS" id="neb">
    <property type="organism name" value="fly"/>
</dbReference>
<dbReference type="GenomeRNAi" id="44272"/>
<dbReference type="PRO" id="PR:Q9U3V5"/>
<dbReference type="Proteomes" id="UP000000803">
    <property type="component" value="Chromosome 2L"/>
</dbReference>
<dbReference type="Bgee" id="FBgn0028979">
    <property type="expression patterns" value="Expressed in adult Malpighian tubule stellate cell of main segment in Malpighian tubule and 36 other cell types or tissues"/>
</dbReference>
<dbReference type="ExpressionAtlas" id="Q9U3V5">
    <property type="expression patterns" value="baseline and differential"/>
</dbReference>
<dbReference type="GO" id="GO:0005634">
    <property type="term" value="C:nucleus"/>
    <property type="evidence" value="ECO:0000314"/>
    <property type="project" value="FlyBase"/>
</dbReference>
<dbReference type="GO" id="GO:0003677">
    <property type="term" value="F:DNA binding"/>
    <property type="evidence" value="ECO:0000318"/>
    <property type="project" value="GO_Central"/>
</dbReference>
<dbReference type="GO" id="GO:0000981">
    <property type="term" value="F:DNA-binding transcription factor activity, RNA polymerase II-specific"/>
    <property type="evidence" value="ECO:0000318"/>
    <property type="project" value="GO_Central"/>
</dbReference>
<dbReference type="GO" id="GO:0008270">
    <property type="term" value="F:zinc ion binding"/>
    <property type="evidence" value="ECO:0007669"/>
    <property type="project" value="UniProtKB-KW"/>
</dbReference>
<dbReference type="GO" id="GO:0048749">
    <property type="term" value="P:compound eye development"/>
    <property type="evidence" value="ECO:0000315"/>
    <property type="project" value="FlyBase"/>
</dbReference>
<dbReference type="GO" id="GO:0048730">
    <property type="term" value="P:epidermis morphogenesis"/>
    <property type="evidence" value="ECO:0000315"/>
    <property type="project" value="FlyBase"/>
</dbReference>
<dbReference type="GO" id="GO:0061330">
    <property type="term" value="P:Malpighian tubule stellate cell differentiation"/>
    <property type="evidence" value="ECO:0000316"/>
    <property type="project" value="FlyBase"/>
</dbReference>
<dbReference type="GO" id="GO:0000122">
    <property type="term" value="P:negative regulation of transcription by RNA polymerase II"/>
    <property type="evidence" value="ECO:0000315"/>
    <property type="project" value="FlyBase"/>
</dbReference>
<dbReference type="GO" id="GO:0006357">
    <property type="term" value="P:regulation of transcription by RNA polymerase II"/>
    <property type="evidence" value="ECO:0000318"/>
    <property type="project" value="GO_Central"/>
</dbReference>
<dbReference type="GO" id="GO:0007380">
    <property type="term" value="P:specification of segmental identity, head"/>
    <property type="evidence" value="ECO:0000315"/>
    <property type="project" value="FlyBase"/>
</dbReference>
<dbReference type="Gene3D" id="3.30.160.60">
    <property type="entry name" value="Classic Zinc Finger"/>
    <property type="match status" value="1"/>
</dbReference>
<dbReference type="InterPro" id="IPR027008">
    <property type="entry name" value="Teashirt_fam"/>
</dbReference>
<dbReference type="InterPro" id="IPR041661">
    <property type="entry name" value="ZN622/Rei1/Reh1_Znf-C2H2"/>
</dbReference>
<dbReference type="InterPro" id="IPR036236">
    <property type="entry name" value="Znf_C2H2_sf"/>
</dbReference>
<dbReference type="InterPro" id="IPR013087">
    <property type="entry name" value="Znf_C2H2_type"/>
</dbReference>
<dbReference type="PANTHER" id="PTHR12487:SF7">
    <property type="entry name" value="PROTEIN TEASHIRT-RELATED"/>
    <property type="match status" value="1"/>
</dbReference>
<dbReference type="PANTHER" id="PTHR12487">
    <property type="entry name" value="TEASHIRT-RELATED"/>
    <property type="match status" value="1"/>
</dbReference>
<dbReference type="Pfam" id="PF00096">
    <property type="entry name" value="zf-C2H2"/>
    <property type="match status" value="1"/>
</dbReference>
<dbReference type="Pfam" id="PF12756">
    <property type="entry name" value="zf-C2H2_2"/>
    <property type="match status" value="2"/>
</dbReference>
<dbReference type="Pfam" id="PF13912">
    <property type="entry name" value="zf-C2H2_6"/>
    <property type="match status" value="1"/>
</dbReference>
<dbReference type="SMART" id="SM00355">
    <property type="entry name" value="ZnF_C2H2"/>
    <property type="match status" value="4"/>
</dbReference>
<dbReference type="SUPFAM" id="SSF57667">
    <property type="entry name" value="beta-beta-alpha zinc fingers"/>
    <property type="match status" value="1"/>
</dbReference>
<dbReference type="PROSITE" id="PS00028">
    <property type="entry name" value="ZINC_FINGER_C2H2_1"/>
    <property type="match status" value="4"/>
</dbReference>
<dbReference type="PROSITE" id="PS50157">
    <property type="entry name" value="ZINC_FINGER_C2H2_2"/>
    <property type="match status" value="3"/>
</dbReference>
<sequence length="1024" mass="108364">MMLHEAVMLEIYRQALSASELTSPRCQSRDSNTSAGAGAGMADVRCPSNESHCSANDRLTPAATPTLTPTEATISPNSVGLPLTATLPPAAAVALLPPQSAAMAAYLAAAQQNHLLLTNPLAAAASLVQHATQQAVVEGEVESPALDFSRKRPKSHGDDDQEEDQEQDQEQEQEQEPDHDVQCDNGPLDLSVSTGKRQESVSPPARKIPRSISADYKSPLPPGSWMPPINPYLAAVAAKTGGLGYSKLAPSEASKALEKMTEMSRLETSPTAARSLGATSSVGAGVPAGASSNSGGRHSAWQSHWLNKGADTAKDVFKCVWCKQSFSTLANLTAHMKETQHCGVQIPSPLPTGGVGTPSAPPPTRLATSASNSACSSSSSSTSSSSNSSKSELNMLIKETMPLPRKLVRGQDVWLGKGAEQTRQILKCMWCGQSFRSLAEMTSHMQETQHYTNIISQEQIISWKSGDERERPTNTGVPSTSTAAPSSPSCTAPSVSAVLTCKVCDQAFGSLKELSTHMAQKSHYKESPAPSASPPAAGTGNPKRGRQNRNEKRKKSLPVRKLLELERSGSNSSLDSALKPLRDFAAATKITCEKCGSKIETALFVEHIRKCLGESIPIPPRRSNAGVDRLPSPSLGLGAEKPPSVLNALEQLIEKSFESRTSRTMTHGGYSEAGTPLGASILKRLGIEDSSDYTKPLMDAQAMHLLRSSFASRDRSASESSSASRVESSYTPDRQQATPHKSPDTPAPPPPPPPTIKAEPLEAEPLVGCDREGCSPRQQIQVKKEFSMEACRESPRSVSKSPAPQTERSPPDNGSLLALNSMFDQLSGVENSGNNNSGHCFNNNNSCSSVSAQKPKAHPLAALQKLCETTDPPSTGLRSASSAGSSTASATLPSANGNDLVAFSWACNEAVLSASNGGSAGDSSIIKCSYCDTPFASKGAYRHHLSKVHFVKDAGEDSPRLKSPAVQSPRSMPLASPRRSASRSPATGSQQPPPSPTISPYDESPQSKFLKYTELAKQLSSKNA</sequence>
<keyword id="KW-0010">Activator</keyword>
<keyword id="KW-0217">Developmental protein</keyword>
<keyword id="KW-0238">DNA-binding</keyword>
<keyword id="KW-0479">Metal-binding</keyword>
<keyword id="KW-0539">Nucleus</keyword>
<keyword id="KW-1185">Reference proteome</keyword>
<keyword id="KW-0677">Repeat</keyword>
<keyword id="KW-0678">Repressor</keyword>
<keyword id="KW-0804">Transcription</keyword>
<keyword id="KW-0805">Transcription regulation</keyword>
<keyword id="KW-0862">Zinc</keyword>
<keyword id="KW-0863">Zinc-finger</keyword>
<accession>Q9U3V5</accession>
<accession>Q95SG6</accession>
<accession>Q9V9P4</accession>